<sequence>MTFSQMILNLQNYWQEQGCAIMQPYDMPAGAGTFHPATFLRSLGKKPWAAAYVAPSRRPTDGRYGENPNRLGAYYQFQVLIKPSPDNIQELYLKSLENLGFDLKSHDIRFVEDNWESPSLGAWGLGWEVWLDGMEVTQFTYFQQVGGIAVDLVSAEITYGLERIAMYLQNVDNVYDIVWSEFNGEKIKYADVHKQSEYEFSKYNFEVSDVKILNEQFENSYKECKNILEQGLALPAYDYCMLAAHTFNLLDARGAISVAQRQDYMLKIRELSKNCAEIYKKNLNETE</sequence>
<protein>
    <recommendedName>
        <fullName evidence="1">Glycine--tRNA ligase alpha subunit</fullName>
        <ecNumber evidence="1">6.1.1.14</ecNumber>
    </recommendedName>
    <alternativeName>
        <fullName evidence="1">Glycyl-tRNA synthetase alpha subunit</fullName>
        <shortName evidence="1">GlyRS</shortName>
    </alternativeName>
</protein>
<organism>
    <name type="scientific">Campylobacter jejuni subsp. jejuni serotype O:6 (strain 81116 / NCTC 11828)</name>
    <dbReference type="NCBI Taxonomy" id="407148"/>
    <lineage>
        <taxon>Bacteria</taxon>
        <taxon>Pseudomonadati</taxon>
        <taxon>Campylobacterota</taxon>
        <taxon>Epsilonproteobacteria</taxon>
        <taxon>Campylobacterales</taxon>
        <taxon>Campylobacteraceae</taxon>
        <taxon>Campylobacter</taxon>
    </lineage>
</organism>
<evidence type="ECO:0000255" key="1">
    <source>
        <dbReference type="HAMAP-Rule" id="MF_00254"/>
    </source>
</evidence>
<comment type="catalytic activity">
    <reaction evidence="1">
        <text>tRNA(Gly) + glycine + ATP = glycyl-tRNA(Gly) + AMP + diphosphate</text>
        <dbReference type="Rhea" id="RHEA:16013"/>
        <dbReference type="Rhea" id="RHEA-COMP:9664"/>
        <dbReference type="Rhea" id="RHEA-COMP:9683"/>
        <dbReference type="ChEBI" id="CHEBI:30616"/>
        <dbReference type="ChEBI" id="CHEBI:33019"/>
        <dbReference type="ChEBI" id="CHEBI:57305"/>
        <dbReference type="ChEBI" id="CHEBI:78442"/>
        <dbReference type="ChEBI" id="CHEBI:78522"/>
        <dbReference type="ChEBI" id="CHEBI:456215"/>
        <dbReference type="EC" id="6.1.1.14"/>
    </reaction>
</comment>
<comment type="subunit">
    <text evidence="1">Tetramer of two alpha and two beta subunits.</text>
</comment>
<comment type="subcellular location">
    <subcellularLocation>
        <location evidence="1">Cytoplasm</location>
    </subcellularLocation>
</comment>
<comment type="similarity">
    <text evidence="1">Belongs to the class-II aminoacyl-tRNA synthetase family.</text>
</comment>
<name>SYGA_CAMJ8</name>
<gene>
    <name evidence="1" type="primary">glyQ</name>
    <name type="ordered locus">C8J_0671</name>
</gene>
<proteinExistence type="inferred from homology"/>
<keyword id="KW-0030">Aminoacyl-tRNA synthetase</keyword>
<keyword id="KW-0067">ATP-binding</keyword>
<keyword id="KW-0963">Cytoplasm</keyword>
<keyword id="KW-0436">Ligase</keyword>
<keyword id="KW-0547">Nucleotide-binding</keyword>
<keyword id="KW-0648">Protein biosynthesis</keyword>
<dbReference type="EC" id="6.1.1.14" evidence="1"/>
<dbReference type="EMBL" id="CP000814">
    <property type="protein sequence ID" value="ABV52270.1"/>
    <property type="molecule type" value="Genomic_DNA"/>
</dbReference>
<dbReference type="RefSeq" id="WP_002861386.1">
    <property type="nucleotide sequence ID" value="NC_009839.1"/>
</dbReference>
<dbReference type="SMR" id="A8FLD3"/>
<dbReference type="KEGG" id="cju:C8J_0671"/>
<dbReference type="HOGENOM" id="CLU_057066_1_0_7"/>
<dbReference type="GO" id="GO:0005829">
    <property type="term" value="C:cytosol"/>
    <property type="evidence" value="ECO:0007669"/>
    <property type="project" value="TreeGrafter"/>
</dbReference>
<dbReference type="GO" id="GO:0005524">
    <property type="term" value="F:ATP binding"/>
    <property type="evidence" value="ECO:0007669"/>
    <property type="project" value="UniProtKB-UniRule"/>
</dbReference>
<dbReference type="GO" id="GO:0004820">
    <property type="term" value="F:glycine-tRNA ligase activity"/>
    <property type="evidence" value="ECO:0007669"/>
    <property type="project" value="UniProtKB-UniRule"/>
</dbReference>
<dbReference type="GO" id="GO:0006426">
    <property type="term" value="P:glycyl-tRNA aminoacylation"/>
    <property type="evidence" value="ECO:0007669"/>
    <property type="project" value="UniProtKB-UniRule"/>
</dbReference>
<dbReference type="CDD" id="cd00733">
    <property type="entry name" value="GlyRS_alpha_core"/>
    <property type="match status" value="1"/>
</dbReference>
<dbReference type="FunFam" id="3.30.930.10:FF:000006">
    <property type="entry name" value="Glycine--tRNA ligase alpha subunit"/>
    <property type="match status" value="1"/>
</dbReference>
<dbReference type="Gene3D" id="3.30.930.10">
    <property type="entry name" value="Bira Bifunctional Protein, Domain 2"/>
    <property type="match status" value="1"/>
</dbReference>
<dbReference type="Gene3D" id="1.20.58.180">
    <property type="entry name" value="Class II aaRS and biotin synthetases, domain 2"/>
    <property type="match status" value="1"/>
</dbReference>
<dbReference type="HAMAP" id="MF_00254">
    <property type="entry name" value="Gly_tRNA_synth_alpha"/>
    <property type="match status" value="1"/>
</dbReference>
<dbReference type="InterPro" id="IPR045864">
    <property type="entry name" value="aa-tRNA-synth_II/BPL/LPL"/>
</dbReference>
<dbReference type="InterPro" id="IPR006194">
    <property type="entry name" value="Gly-tRNA-synth_heterodimer"/>
</dbReference>
<dbReference type="InterPro" id="IPR002310">
    <property type="entry name" value="Gly-tRNA_ligase_asu"/>
</dbReference>
<dbReference type="NCBIfam" id="TIGR00388">
    <property type="entry name" value="glyQ"/>
    <property type="match status" value="1"/>
</dbReference>
<dbReference type="NCBIfam" id="NF006827">
    <property type="entry name" value="PRK09348.1"/>
    <property type="match status" value="1"/>
</dbReference>
<dbReference type="PANTHER" id="PTHR30075:SF2">
    <property type="entry name" value="GLYCINE--TRNA LIGASE, CHLOROPLASTIC_MITOCHONDRIAL 2"/>
    <property type="match status" value="1"/>
</dbReference>
<dbReference type="PANTHER" id="PTHR30075">
    <property type="entry name" value="GLYCYL-TRNA SYNTHETASE"/>
    <property type="match status" value="1"/>
</dbReference>
<dbReference type="Pfam" id="PF02091">
    <property type="entry name" value="tRNA-synt_2e"/>
    <property type="match status" value="1"/>
</dbReference>
<dbReference type="PRINTS" id="PR01044">
    <property type="entry name" value="TRNASYNTHGA"/>
</dbReference>
<dbReference type="SUPFAM" id="SSF55681">
    <property type="entry name" value="Class II aaRS and biotin synthetases"/>
    <property type="match status" value="1"/>
</dbReference>
<dbReference type="PROSITE" id="PS50861">
    <property type="entry name" value="AA_TRNA_LIGASE_II_GLYAB"/>
    <property type="match status" value="1"/>
</dbReference>
<reference key="1">
    <citation type="journal article" date="2007" name="J. Bacteriol.">
        <title>The complete genome sequence of Campylobacter jejuni strain 81116 (NCTC11828).</title>
        <authorList>
            <person name="Pearson B.M."/>
            <person name="Gaskin D.J.H."/>
            <person name="Segers R.P.A.M."/>
            <person name="Wells J.M."/>
            <person name="Nuijten P.J.M."/>
            <person name="van Vliet A.H.M."/>
        </authorList>
    </citation>
    <scope>NUCLEOTIDE SEQUENCE [LARGE SCALE GENOMIC DNA]</scope>
    <source>
        <strain>81116 / NCTC 11828</strain>
    </source>
</reference>
<accession>A8FLD3</accession>
<feature type="chain" id="PRO_1000071875" description="Glycine--tRNA ligase alpha subunit">
    <location>
        <begin position="1"/>
        <end position="287"/>
    </location>
</feature>